<reference key="1">
    <citation type="submission" date="2006-12" db="EMBL/GenBank/DDBJ databases">
        <title>Complete sequence of Shewanella sp. W3-18-1.</title>
        <authorList>
            <consortium name="US DOE Joint Genome Institute"/>
            <person name="Copeland A."/>
            <person name="Lucas S."/>
            <person name="Lapidus A."/>
            <person name="Barry K."/>
            <person name="Detter J.C."/>
            <person name="Glavina del Rio T."/>
            <person name="Hammon N."/>
            <person name="Israni S."/>
            <person name="Dalin E."/>
            <person name="Tice H."/>
            <person name="Pitluck S."/>
            <person name="Chain P."/>
            <person name="Malfatti S."/>
            <person name="Shin M."/>
            <person name="Vergez L."/>
            <person name="Schmutz J."/>
            <person name="Larimer F."/>
            <person name="Land M."/>
            <person name="Hauser L."/>
            <person name="Kyrpides N."/>
            <person name="Lykidis A."/>
            <person name="Tiedje J."/>
            <person name="Richardson P."/>
        </authorList>
    </citation>
    <scope>NUCLEOTIDE SEQUENCE [LARGE SCALE GENOMIC DNA]</scope>
    <source>
        <strain>W3-18-1</strain>
    </source>
</reference>
<accession>A1RIE5</accession>
<evidence type="ECO:0000255" key="1">
    <source>
        <dbReference type="HAMAP-Rule" id="MF_00211"/>
    </source>
</evidence>
<name>TRPD_SHESW</name>
<feature type="chain" id="PRO_1000043069" description="Anthranilate phosphoribosyltransferase">
    <location>
        <begin position="1"/>
        <end position="348"/>
    </location>
</feature>
<feature type="binding site" evidence="1">
    <location>
        <position position="89"/>
    </location>
    <ligand>
        <name>5-phospho-alpha-D-ribose 1-diphosphate</name>
        <dbReference type="ChEBI" id="CHEBI:58017"/>
    </ligand>
</feature>
<feature type="binding site" evidence="1">
    <location>
        <position position="89"/>
    </location>
    <ligand>
        <name>anthranilate</name>
        <dbReference type="ChEBI" id="CHEBI:16567"/>
        <label>1</label>
    </ligand>
</feature>
<feature type="binding site" evidence="1">
    <location>
        <begin position="92"/>
        <end position="93"/>
    </location>
    <ligand>
        <name>5-phospho-alpha-D-ribose 1-diphosphate</name>
        <dbReference type="ChEBI" id="CHEBI:58017"/>
    </ligand>
</feature>
<feature type="binding site" evidence="1">
    <location>
        <position position="97"/>
    </location>
    <ligand>
        <name>5-phospho-alpha-D-ribose 1-diphosphate</name>
        <dbReference type="ChEBI" id="CHEBI:58017"/>
    </ligand>
</feature>
<feature type="binding site" evidence="1">
    <location>
        <begin position="99"/>
        <end position="102"/>
    </location>
    <ligand>
        <name>5-phospho-alpha-D-ribose 1-diphosphate</name>
        <dbReference type="ChEBI" id="CHEBI:58017"/>
    </ligand>
</feature>
<feature type="binding site" evidence="1">
    <location>
        <position position="101"/>
    </location>
    <ligand>
        <name>Mg(2+)</name>
        <dbReference type="ChEBI" id="CHEBI:18420"/>
        <label>1</label>
    </ligand>
</feature>
<feature type="binding site" evidence="1">
    <location>
        <begin position="117"/>
        <end position="125"/>
    </location>
    <ligand>
        <name>5-phospho-alpha-D-ribose 1-diphosphate</name>
        <dbReference type="ChEBI" id="CHEBI:58017"/>
    </ligand>
</feature>
<feature type="binding site" evidence="1">
    <location>
        <position position="120"/>
    </location>
    <ligand>
        <name>anthranilate</name>
        <dbReference type="ChEBI" id="CHEBI:16567"/>
        <label>1</label>
    </ligand>
</feature>
<feature type="binding site" evidence="1">
    <location>
        <position position="129"/>
    </location>
    <ligand>
        <name>5-phospho-alpha-D-ribose 1-diphosphate</name>
        <dbReference type="ChEBI" id="CHEBI:58017"/>
    </ligand>
</feature>
<feature type="binding site" evidence="1">
    <location>
        <position position="175"/>
    </location>
    <ligand>
        <name>anthranilate</name>
        <dbReference type="ChEBI" id="CHEBI:16567"/>
        <label>2</label>
    </ligand>
</feature>
<feature type="binding site" evidence="1">
    <location>
        <position position="233"/>
    </location>
    <ligand>
        <name>Mg(2+)</name>
        <dbReference type="ChEBI" id="CHEBI:18420"/>
        <label>2</label>
    </ligand>
</feature>
<feature type="binding site" evidence="1">
    <location>
        <position position="234"/>
    </location>
    <ligand>
        <name>Mg(2+)</name>
        <dbReference type="ChEBI" id="CHEBI:18420"/>
        <label>1</label>
    </ligand>
</feature>
<feature type="binding site" evidence="1">
    <location>
        <position position="234"/>
    </location>
    <ligand>
        <name>Mg(2+)</name>
        <dbReference type="ChEBI" id="CHEBI:18420"/>
        <label>2</label>
    </ligand>
</feature>
<proteinExistence type="inferred from homology"/>
<keyword id="KW-0028">Amino-acid biosynthesis</keyword>
<keyword id="KW-0057">Aromatic amino acid biosynthesis</keyword>
<keyword id="KW-0328">Glycosyltransferase</keyword>
<keyword id="KW-0460">Magnesium</keyword>
<keyword id="KW-0479">Metal-binding</keyword>
<keyword id="KW-0808">Transferase</keyword>
<keyword id="KW-0822">Tryptophan biosynthesis</keyword>
<gene>
    <name evidence="1" type="primary">trpD</name>
    <name type="ordered locus">Sputw3181_1603</name>
</gene>
<sequence length="348" mass="36254">MSTNHIQPLLDLLYQGKSLSREQAFEIFSALIRGEMSEATMAGMLVALKIRGETIDEISGAADAMRAAAKTFPYSNGDNLGNGIVDIVGTGGDGFNTINISTTAAFVAAAAGAKVAKHGNRSVSSKSGSSDLLAQFGIDLTMSPDTASRCLDALNLCFLFAPHYHGGVKHAGPVRQALKTRTLFNVLGPLINPARPEFMLLGVYSPELVLPIAKVLKALGTKRAMVVHGSGLDEVALHGNTLVAELKDGDIIEYQLTPADLGVPLAQISDLEGGEPAQNALITEAILRGRGTDAHANAVAINAGCALYVCGIADSVKAGTLLALSTIQSGKAFELLSQLAKVSSETKE</sequence>
<dbReference type="EC" id="2.4.2.18" evidence="1"/>
<dbReference type="EMBL" id="CP000503">
    <property type="protein sequence ID" value="ABM24440.1"/>
    <property type="molecule type" value="Genomic_DNA"/>
</dbReference>
<dbReference type="RefSeq" id="WP_011788940.1">
    <property type="nucleotide sequence ID" value="NC_008750.1"/>
</dbReference>
<dbReference type="SMR" id="A1RIE5"/>
<dbReference type="KEGG" id="shw:Sputw3181_1603"/>
<dbReference type="HOGENOM" id="CLU_034315_2_1_6"/>
<dbReference type="UniPathway" id="UPA00035">
    <property type="reaction ID" value="UER00041"/>
</dbReference>
<dbReference type="Proteomes" id="UP000002597">
    <property type="component" value="Chromosome"/>
</dbReference>
<dbReference type="GO" id="GO:0005829">
    <property type="term" value="C:cytosol"/>
    <property type="evidence" value="ECO:0007669"/>
    <property type="project" value="TreeGrafter"/>
</dbReference>
<dbReference type="GO" id="GO:0004048">
    <property type="term" value="F:anthranilate phosphoribosyltransferase activity"/>
    <property type="evidence" value="ECO:0007669"/>
    <property type="project" value="UniProtKB-UniRule"/>
</dbReference>
<dbReference type="GO" id="GO:0000287">
    <property type="term" value="F:magnesium ion binding"/>
    <property type="evidence" value="ECO:0007669"/>
    <property type="project" value="UniProtKB-UniRule"/>
</dbReference>
<dbReference type="GO" id="GO:0000162">
    <property type="term" value="P:L-tryptophan biosynthetic process"/>
    <property type="evidence" value="ECO:0007669"/>
    <property type="project" value="UniProtKB-UniRule"/>
</dbReference>
<dbReference type="FunFam" id="3.40.1030.10:FF:000002">
    <property type="entry name" value="Anthranilate phosphoribosyltransferase"/>
    <property type="match status" value="1"/>
</dbReference>
<dbReference type="Gene3D" id="3.40.1030.10">
    <property type="entry name" value="Nucleoside phosphorylase/phosphoribosyltransferase catalytic domain"/>
    <property type="match status" value="1"/>
</dbReference>
<dbReference type="Gene3D" id="1.20.970.10">
    <property type="entry name" value="Transferase, Pyrimidine Nucleoside Phosphorylase, Chain C"/>
    <property type="match status" value="1"/>
</dbReference>
<dbReference type="HAMAP" id="MF_00211">
    <property type="entry name" value="TrpD"/>
    <property type="match status" value="1"/>
</dbReference>
<dbReference type="InterPro" id="IPR005940">
    <property type="entry name" value="Anthranilate_Pribosyl_Tfrase"/>
</dbReference>
<dbReference type="InterPro" id="IPR000312">
    <property type="entry name" value="Glycosyl_Trfase_fam3"/>
</dbReference>
<dbReference type="InterPro" id="IPR017459">
    <property type="entry name" value="Glycosyl_Trfase_fam3_N_dom"/>
</dbReference>
<dbReference type="InterPro" id="IPR036320">
    <property type="entry name" value="Glycosyl_Trfase_fam3_N_dom_sf"/>
</dbReference>
<dbReference type="InterPro" id="IPR035902">
    <property type="entry name" value="Nuc_phospho_transferase"/>
</dbReference>
<dbReference type="NCBIfam" id="TIGR01245">
    <property type="entry name" value="trpD"/>
    <property type="match status" value="1"/>
</dbReference>
<dbReference type="PANTHER" id="PTHR43285">
    <property type="entry name" value="ANTHRANILATE PHOSPHORIBOSYLTRANSFERASE"/>
    <property type="match status" value="1"/>
</dbReference>
<dbReference type="PANTHER" id="PTHR43285:SF2">
    <property type="entry name" value="ANTHRANILATE PHOSPHORIBOSYLTRANSFERASE"/>
    <property type="match status" value="1"/>
</dbReference>
<dbReference type="Pfam" id="PF02885">
    <property type="entry name" value="Glycos_trans_3N"/>
    <property type="match status" value="1"/>
</dbReference>
<dbReference type="Pfam" id="PF00591">
    <property type="entry name" value="Glycos_transf_3"/>
    <property type="match status" value="1"/>
</dbReference>
<dbReference type="SUPFAM" id="SSF52418">
    <property type="entry name" value="Nucleoside phosphorylase/phosphoribosyltransferase catalytic domain"/>
    <property type="match status" value="1"/>
</dbReference>
<dbReference type="SUPFAM" id="SSF47648">
    <property type="entry name" value="Nucleoside phosphorylase/phosphoribosyltransferase N-terminal domain"/>
    <property type="match status" value="1"/>
</dbReference>
<comment type="function">
    <text evidence="1">Catalyzes the transfer of the phosphoribosyl group of 5-phosphorylribose-1-pyrophosphate (PRPP) to anthranilate to yield N-(5'-phosphoribosyl)-anthranilate (PRA).</text>
</comment>
<comment type="catalytic activity">
    <reaction evidence="1">
        <text>N-(5-phospho-beta-D-ribosyl)anthranilate + diphosphate = 5-phospho-alpha-D-ribose 1-diphosphate + anthranilate</text>
        <dbReference type="Rhea" id="RHEA:11768"/>
        <dbReference type="ChEBI" id="CHEBI:16567"/>
        <dbReference type="ChEBI" id="CHEBI:18277"/>
        <dbReference type="ChEBI" id="CHEBI:33019"/>
        <dbReference type="ChEBI" id="CHEBI:58017"/>
        <dbReference type="EC" id="2.4.2.18"/>
    </reaction>
</comment>
<comment type="cofactor">
    <cofactor evidence="1">
        <name>Mg(2+)</name>
        <dbReference type="ChEBI" id="CHEBI:18420"/>
    </cofactor>
    <text evidence="1">Binds 2 magnesium ions per monomer.</text>
</comment>
<comment type="pathway">
    <text evidence="1">Amino-acid biosynthesis; L-tryptophan biosynthesis; L-tryptophan from chorismate: step 2/5.</text>
</comment>
<comment type="subunit">
    <text evidence="1">Homodimer.</text>
</comment>
<comment type="similarity">
    <text evidence="1">Belongs to the anthranilate phosphoribosyltransferase family.</text>
</comment>
<protein>
    <recommendedName>
        <fullName evidence="1">Anthranilate phosphoribosyltransferase</fullName>
        <ecNumber evidence="1">2.4.2.18</ecNumber>
    </recommendedName>
</protein>
<organism>
    <name type="scientific">Shewanella sp. (strain W3-18-1)</name>
    <dbReference type="NCBI Taxonomy" id="351745"/>
    <lineage>
        <taxon>Bacteria</taxon>
        <taxon>Pseudomonadati</taxon>
        <taxon>Pseudomonadota</taxon>
        <taxon>Gammaproteobacteria</taxon>
        <taxon>Alteromonadales</taxon>
        <taxon>Shewanellaceae</taxon>
        <taxon>Shewanella</taxon>
    </lineage>
</organism>